<gene>
    <name type="primary">MVP</name>
</gene>
<reference key="1">
    <citation type="submission" date="2004-11" db="EMBL/GenBank/DDBJ databases">
        <authorList>
            <consortium name="The German cDNA consortium"/>
        </authorList>
    </citation>
    <scope>NUCLEOTIDE SEQUENCE [LARGE SCALE MRNA]</scope>
    <source>
        <tissue>Kidney</tissue>
    </source>
</reference>
<keyword id="KW-0007">Acetylation</keyword>
<keyword id="KW-0963">Cytoplasm</keyword>
<keyword id="KW-1017">Isopeptide bond</keyword>
<keyword id="KW-0539">Nucleus</keyword>
<keyword id="KW-0597">Phosphoprotein</keyword>
<keyword id="KW-1185">Reference proteome</keyword>
<keyword id="KW-0677">Repeat</keyword>
<keyword id="KW-0687">Ribonucleoprotein</keyword>
<keyword id="KW-0832">Ubl conjugation</keyword>
<proteinExistence type="evidence at transcript level"/>
<feature type="initiator methionine" description="Removed" evidence="2">
    <location>
        <position position="1"/>
    </location>
</feature>
<feature type="chain" id="PRO_0000246783" description="Major vault protein">
    <location>
        <begin position="2"/>
        <end position="893"/>
    </location>
</feature>
<feature type="repeat" description="MVP 1">
    <location>
        <begin position="2"/>
        <end position="56"/>
    </location>
</feature>
<feature type="repeat" description="MVP 2">
    <location>
        <begin position="57"/>
        <end position="111"/>
    </location>
</feature>
<feature type="repeat" description="MVP 3">
    <location>
        <begin position="112"/>
        <end position="164"/>
    </location>
</feature>
<feature type="repeat" description="MVP 4">
    <location>
        <begin position="165"/>
        <end position="217"/>
    </location>
</feature>
<feature type="repeat" description="MVP 5">
    <location>
        <begin position="218"/>
        <end position="272"/>
    </location>
</feature>
<feature type="repeat" description="MVP 6">
    <location>
        <begin position="273"/>
        <end position="323"/>
    </location>
</feature>
<feature type="repeat" description="MVP 7">
    <location>
        <begin position="324"/>
        <end position="379"/>
    </location>
</feature>
<feature type="repeat" description="MVP 8">
    <location>
        <begin position="380"/>
        <end position="457"/>
    </location>
</feature>
<feature type="repeat" description="MVP 9">
    <location>
        <begin position="458"/>
        <end position="520"/>
    </location>
</feature>
<feature type="region of interest" description="Disordered" evidence="3">
    <location>
        <begin position="856"/>
        <end position="893"/>
    </location>
</feature>
<feature type="modified residue" description="N-acetylalanine" evidence="2">
    <location>
        <position position="2"/>
    </location>
</feature>
<feature type="modified residue" description="Phosphoserine" evidence="2">
    <location>
        <position position="445"/>
    </location>
</feature>
<feature type="cross-link" description="Glycyl lysine isopeptide (Lys-Gly) (interchain with G-Cter in SUMO2)" evidence="2">
    <location>
        <position position="444"/>
    </location>
</feature>
<feature type="cross-link" description="Glycyl lysine isopeptide (Lys-Gly) (interchain with G-Cter in SUMO2)" evidence="2">
    <location>
        <position position="704"/>
    </location>
</feature>
<name>MVP_PONAB</name>
<evidence type="ECO:0000250" key="1"/>
<evidence type="ECO:0000250" key="2">
    <source>
        <dbReference type="UniProtKB" id="Q14764"/>
    </source>
</evidence>
<evidence type="ECO:0000256" key="3">
    <source>
        <dbReference type="SAM" id="MobiDB-lite"/>
    </source>
</evidence>
<comment type="function">
    <text evidence="1">Required for normal vault structure. Vaults are multi-subunit structures that may act as scaffolds for proteins involved in signal transduction. Vaults may also play a role in nucleo-cytoplasmic transport. Down-regulates IFNG-mediated STAT1 signaling and subsequent activation of JAK. Down-regulates SRC activity and signaling through MAP kinases (By similarity).</text>
</comment>
<comment type="subunit">
    <text evidence="1">The vault ribonucleoprotein particle is a huge (400 A x 670 A) cage structure of 12.9 MDa. It consists of a dimer of half-vaults, with each half-vault comprising 39 identical major vault protein (MVP) chains, PARP4 and one or more vault RNAs (vRNAs). Interacts with TEP1. Interacts with PTEN and activated MAPK1. The phosphorylated protein interacts with the SH2 domains of PTPN11 and SRC. Interacts with APEX1. May interact with ZNF540 (By similarity).</text>
</comment>
<comment type="subcellular location">
    <subcellularLocation>
        <location evidence="2">Cytoplasm</location>
    </subcellularLocation>
    <subcellularLocation>
        <location evidence="2">Nucleus</location>
    </subcellularLocation>
</comment>
<comment type="domain">
    <text evidence="1">MVP 3 mediates interaction with PTEN.</text>
</comment>
<comment type="domain">
    <text evidence="1">MVP 4 mediates interaction with PARP4.</text>
</comment>
<comment type="PTM">
    <text evidence="1">Phosphorylated on Tyr residues after EGF stimulation.</text>
</comment>
<comment type="PTM">
    <text evidence="1">Dephosphorylated by PTPN11.</text>
</comment>
<organism>
    <name type="scientific">Pongo abelii</name>
    <name type="common">Sumatran orangutan</name>
    <name type="synonym">Pongo pygmaeus abelii</name>
    <dbReference type="NCBI Taxonomy" id="9601"/>
    <lineage>
        <taxon>Eukaryota</taxon>
        <taxon>Metazoa</taxon>
        <taxon>Chordata</taxon>
        <taxon>Craniata</taxon>
        <taxon>Vertebrata</taxon>
        <taxon>Euteleostomi</taxon>
        <taxon>Mammalia</taxon>
        <taxon>Eutheria</taxon>
        <taxon>Euarchontoglires</taxon>
        <taxon>Primates</taxon>
        <taxon>Haplorrhini</taxon>
        <taxon>Catarrhini</taxon>
        <taxon>Hominidae</taxon>
        <taxon>Pongo</taxon>
    </lineage>
</organism>
<protein>
    <recommendedName>
        <fullName>Major vault protein</fullName>
        <shortName>MVP</shortName>
    </recommendedName>
</protein>
<dbReference type="EMBL" id="CR859354">
    <property type="protein sequence ID" value="CAH91528.1"/>
    <property type="molecule type" value="mRNA"/>
</dbReference>
<dbReference type="RefSeq" id="NP_001125896.1">
    <property type="nucleotide sequence ID" value="NM_001132424.1"/>
</dbReference>
<dbReference type="SMR" id="Q5R9N2"/>
<dbReference type="FunCoup" id="Q5R9N2">
    <property type="interactions" value="653"/>
</dbReference>
<dbReference type="STRING" id="9601.ENSPPYP00000008203"/>
<dbReference type="GeneID" id="100172829"/>
<dbReference type="KEGG" id="pon:100172829"/>
<dbReference type="CTD" id="9961"/>
<dbReference type="eggNOG" id="ENOG502QPP0">
    <property type="taxonomic scope" value="Eukaryota"/>
</dbReference>
<dbReference type="InParanoid" id="Q5R9N2"/>
<dbReference type="OrthoDB" id="6125719at2759"/>
<dbReference type="Proteomes" id="UP000001595">
    <property type="component" value="Unplaced"/>
</dbReference>
<dbReference type="GO" id="GO:0005737">
    <property type="term" value="C:cytoplasm"/>
    <property type="evidence" value="ECO:0007669"/>
    <property type="project" value="UniProtKB-SubCell"/>
</dbReference>
<dbReference type="GO" id="GO:0005634">
    <property type="term" value="C:nucleus"/>
    <property type="evidence" value="ECO:0007669"/>
    <property type="project" value="UniProtKB-SubCell"/>
</dbReference>
<dbReference type="GO" id="GO:1990904">
    <property type="term" value="C:ribonucleoprotein complex"/>
    <property type="evidence" value="ECO:0007669"/>
    <property type="project" value="UniProtKB-KW"/>
</dbReference>
<dbReference type="CDD" id="cd08825">
    <property type="entry name" value="MVP_shoulder"/>
    <property type="match status" value="1"/>
</dbReference>
<dbReference type="FunFam" id="2.30.30.550:FF:000002">
    <property type="entry name" value="Major vault protein"/>
    <property type="match status" value="1"/>
</dbReference>
<dbReference type="FunFam" id="2.30.30.560:FF:000002">
    <property type="entry name" value="Major vault protein-alpha"/>
    <property type="match status" value="1"/>
</dbReference>
<dbReference type="FunFam" id="2.30.30.570:FF:000002">
    <property type="entry name" value="Major vault protein-alpha"/>
    <property type="match status" value="1"/>
</dbReference>
<dbReference type="FunFam" id="2.30.30.550:FF:000001">
    <property type="entry name" value="major vault protein-like"/>
    <property type="match status" value="3"/>
</dbReference>
<dbReference type="FunFam" id="2.30.30.560:FF:000001">
    <property type="entry name" value="major vault protein-like"/>
    <property type="match status" value="1"/>
</dbReference>
<dbReference type="FunFam" id="2.30.30.570:FF:000001">
    <property type="entry name" value="major vault protein-like"/>
    <property type="match status" value="1"/>
</dbReference>
<dbReference type="FunFam" id="2.30.30.620:FF:000001">
    <property type="entry name" value="major vault protein-like"/>
    <property type="match status" value="1"/>
</dbReference>
<dbReference type="FunFam" id="3.30.479.30:FF:000010">
    <property type="entry name" value="major vault protein-like"/>
    <property type="match status" value="1"/>
</dbReference>
<dbReference type="Gene3D" id="2.30.30.560">
    <property type="match status" value="2"/>
</dbReference>
<dbReference type="Gene3D" id="2.30.30.570">
    <property type="match status" value="2"/>
</dbReference>
<dbReference type="Gene3D" id="2.30.30.620">
    <property type="match status" value="1"/>
</dbReference>
<dbReference type="Gene3D" id="6.10.250.720">
    <property type="match status" value="1"/>
</dbReference>
<dbReference type="Gene3D" id="6.20.380.10">
    <property type="match status" value="1"/>
</dbReference>
<dbReference type="Gene3D" id="3.30.479.30">
    <property type="entry name" value="Band 7 domain"/>
    <property type="match status" value="1"/>
</dbReference>
<dbReference type="Gene3D" id="2.30.30.550">
    <property type="entry name" value="Major Vault Protein repeat"/>
    <property type="match status" value="4"/>
</dbReference>
<dbReference type="InterPro" id="IPR036013">
    <property type="entry name" value="Band_7/SPFH_dom_sf"/>
</dbReference>
<dbReference type="InterPro" id="IPR039059">
    <property type="entry name" value="MVP"/>
</dbReference>
<dbReference type="InterPro" id="IPR041139">
    <property type="entry name" value="MVP_rep_dom"/>
</dbReference>
<dbReference type="InterPro" id="IPR043023">
    <property type="entry name" value="MVP_rep_sf"/>
</dbReference>
<dbReference type="InterPro" id="IPR021870">
    <property type="entry name" value="MVP_shoulder"/>
</dbReference>
<dbReference type="InterPro" id="IPR041134">
    <property type="entry name" value="Vault_2"/>
</dbReference>
<dbReference type="InterPro" id="IPR043179">
    <property type="entry name" value="Vault_2_sf"/>
</dbReference>
<dbReference type="InterPro" id="IPR040989">
    <property type="entry name" value="Vault_3"/>
</dbReference>
<dbReference type="InterPro" id="IPR041136">
    <property type="entry name" value="Vault_4"/>
</dbReference>
<dbReference type="InterPro" id="IPR002499">
    <property type="entry name" value="Vault_N"/>
</dbReference>
<dbReference type="PANTHER" id="PTHR14165">
    <property type="entry name" value="MAJOR VAULT PROTEIN"/>
    <property type="match status" value="1"/>
</dbReference>
<dbReference type="PANTHER" id="PTHR14165:SF3">
    <property type="entry name" value="MAJOR VAULT PROTEIN"/>
    <property type="match status" value="1"/>
</dbReference>
<dbReference type="Pfam" id="PF11978">
    <property type="entry name" value="MVP_shoulder"/>
    <property type="match status" value="1"/>
</dbReference>
<dbReference type="Pfam" id="PF01505">
    <property type="entry name" value="Vault"/>
    <property type="match status" value="4"/>
</dbReference>
<dbReference type="Pfam" id="PF17794">
    <property type="entry name" value="Vault_2"/>
    <property type="match status" value="2"/>
</dbReference>
<dbReference type="Pfam" id="PF17795">
    <property type="entry name" value="Vault_3"/>
    <property type="match status" value="1"/>
</dbReference>
<dbReference type="Pfam" id="PF17796">
    <property type="entry name" value="Vault_4"/>
    <property type="match status" value="1"/>
</dbReference>
<dbReference type="PROSITE" id="PS51224">
    <property type="entry name" value="MVP"/>
    <property type="match status" value="8"/>
</dbReference>
<sequence length="893" mass="99234">MATEEFIIRIPPYHYIHVLDQNSNVSHVEVGPKTYIRQDNERVLFAPMRMVTVPPRHYCTVANPVSRDAQGLVLFDVTGQVRLRHADLEIRLAQDPFPLYPGEVLEKDITPLQVVLPNTALHLKALLDFEDKDGDKVVAGDEWLLEGPGTYIPRKEVEVVEIIQATIIRQNQALRLRARKECWDRDGKERVTGEEWLVTTVGAYLPAVFEEVLDLVDAVILTEKTALHLRARRNFRDFRGVSRRTGEEWLVTVQDTEAHVPDVHEEVLGVVPITTLGPHNYCVILDPVGPDGKNQLGQKRVVKGEKSFFLQPGEQLEQGIQDVYVLSEQQGLLLRALQPLEDGEDEEKVSHQAGDRWLIRGPLEYVPSAKVEVVEERQAIPLDENEGIYVQDVKTGKVRAVIGSTYMLTQDEVLWEKELPPGVEELLNKGQDPLADRGEKDTAKSLQPLAPRNKTRVVSYRVPHNAAVQVYDYREKRARVVFGPELVSLGPEEQFTVLSLSAGRPKRPHARRALCLLLGPDFFTDVITIETADHARLQLQLAYNWHFQVNDRKDPQETAKLFSVPDFVGDACKAIASRVRGAVASVTFDDFHKNSARIIRAAVFGFETSEAKDPDGMALPRPRDQAVFPQNGLVVSSVDVQSVEPVDQRTRDALQRSVQLAIEITTNSQEAAAKHEAQRLEQEARGRLERQKILDQSEAEKARKELLELEALSMAVESTGTAKAEAESRAEAARIEGEGSVLQAKLKAQALAIETEAELQRVQKVRELELVYARAQLELGVSKAQQLAEVEVKKFKQMTEAIGPSTIRDLAVAGPEMQVKLLQSLGLKSTLITDGSTPINLFNTAFGLLGMGPEGQPLGRRVASGPSPGEGISPQSAQAPQAPGDNHVVPVLR</sequence>
<accession>Q5R9N2</accession>